<keyword id="KW-0175">Coiled coil</keyword>
<keyword id="KW-0256">Endoplasmic reticulum</keyword>
<keyword id="KW-0342">GTP-binding</keyword>
<keyword id="KW-0378">Hydrolase</keyword>
<keyword id="KW-0472">Membrane</keyword>
<keyword id="KW-0547">Nucleotide-binding</keyword>
<keyword id="KW-1185">Reference proteome</keyword>
<keyword id="KW-0812">Transmembrane</keyword>
<keyword id="KW-1133">Transmembrane helix</keyword>
<reference key="1">
    <citation type="journal article" date="2009" name="Genome Res.">
        <title>Comparative genomic analyses of the human fungal pathogens Coccidioides and their relatives.</title>
        <authorList>
            <person name="Sharpton T.J."/>
            <person name="Stajich J.E."/>
            <person name="Rounsley S.D."/>
            <person name="Gardner M.J."/>
            <person name="Wortman J.R."/>
            <person name="Jordar V.S."/>
            <person name="Maiti R."/>
            <person name="Kodira C.D."/>
            <person name="Neafsey D.E."/>
            <person name="Zeng Q."/>
            <person name="Hung C.-Y."/>
            <person name="McMahan C."/>
            <person name="Muszewska A."/>
            <person name="Grynberg M."/>
            <person name="Mandel M.A."/>
            <person name="Kellner E.M."/>
            <person name="Barker B.M."/>
            <person name="Galgiani J.N."/>
            <person name="Orbach M.J."/>
            <person name="Kirkland T.N."/>
            <person name="Cole G.T."/>
            <person name="Henn M.R."/>
            <person name="Birren B.W."/>
            <person name="Taylor J.W."/>
        </authorList>
    </citation>
    <scope>NUCLEOTIDE SEQUENCE [LARGE SCALE GENOMIC DNA]</scope>
    <source>
        <strain>NAm1 / WU24</strain>
    </source>
</reference>
<proteinExistence type="inferred from homology"/>
<comment type="function">
    <text evidence="1">Cooperates with the reticulon proteins and tubule-shaping DP1 family proteins to generate and maintain the structure of the tubular endoplasmic reticulum network. Has GTPase activity, which is required for its function in ER organization.</text>
</comment>
<comment type="subcellular location">
    <subcellularLocation>
        <location evidence="1">Endoplasmic reticulum membrane</location>
        <topology evidence="1">Multi-pass membrane protein</topology>
    </subcellularLocation>
    <text evidence="1">Enriched in the cortical ER. Concentrated in punctae along the ER tubules.</text>
</comment>
<comment type="similarity">
    <text evidence="2">Belongs to the TRAFAC class dynamin-like GTPase superfamily. GB1/RHD3 GTPase family. RHD3 subfamily.</text>
</comment>
<evidence type="ECO:0000255" key="1">
    <source>
        <dbReference type="HAMAP-Rule" id="MF_03109"/>
    </source>
</evidence>
<evidence type="ECO:0000255" key="2">
    <source>
        <dbReference type="PROSITE-ProRule" id="PRU01052"/>
    </source>
</evidence>
<evidence type="ECO:0000256" key="3">
    <source>
        <dbReference type="SAM" id="MobiDB-lite"/>
    </source>
</evidence>
<organism>
    <name type="scientific">Ajellomyces capsulatus (strain NAm1 / WU24)</name>
    <name type="common">Darling's disease fungus</name>
    <name type="synonym">Histoplasma capsulatum</name>
    <dbReference type="NCBI Taxonomy" id="2059318"/>
    <lineage>
        <taxon>Eukaryota</taxon>
        <taxon>Fungi</taxon>
        <taxon>Dikarya</taxon>
        <taxon>Ascomycota</taxon>
        <taxon>Pezizomycotina</taxon>
        <taxon>Eurotiomycetes</taxon>
        <taxon>Eurotiomycetidae</taxon>
        <taxon>Onygenales</taxon>
        <taxon>Ajellomycetaceae</taxon>
        <taxon>Histoplasma</taxon>
    </lineage>
</organism>
<gene>
    <name evidence="1" type="primary">SEY1</name>
    <name type="ORF">HCAG_03442</name>
</gene>
<name>SEY1_AJECN</name>
<accession>A6R1D5</accession>
<dbReference type="EC" id="3.6.5.-" evidence="1"/>
<dbReference type="EMBL" id="CH476657">
    <property type="protein sequence ID" value="EDN06912.1"/>
    <property type="molecule type" value="Genomic_DNA"/>
</dbReference>
<dbReference type="SMR" id="A6R1D5"/>
<dbReference type="STRING" id="339724.A6R1D5"/>
<dbReference type="KEGG" id="aje:HCAG_03442"/>
<dbReference type="VEuPathDB" id="FungiDB:HCAG_03442"/>
<dbReference type="HOGENOM" id="CLU_011270_0_0_1"/>
<dbReference type="OMA" id="PIIKMTE"/>
<dbReference type="OrthoDB" id="2663at299071"/>
<dbReference type="Proteomes" id="UP000009297">
    <property type="component" value="Unassembled WGS sequence"/>
</dbReference>
<dbReference type="GO" id="GO:0005789">
    <property type="term" value="C:endoplasmic reticulum membrane"/>
    <property type="evidence" value="ECO:0007669"/>
    <property type="project" value="UniProtKB-SubCell"/>
</dbReference>
<dbReference type="GO" id="GO:0005525">
    <property type="term" value="F:GTP binding"/>
    <property type="evidence" value="ECO:0007669"/>
    <property type="project" value="UniProtKB-UniRule"/>
</dbReference>
<dbReference type="GO" id="GO:0003924">
    <property type="term" value="F:GTPase activity"/>
    <property type="evidence" value="ECO:0007669"/>
    <property type="project" value="UniProtKB-UniRule"/>
</dbReference>
<dbReference type="GO" id="GO:0016320">
    <property type="term" value="P:endoplasmic reticulum membrane fusion"/>
    <property type="evidence" value="ECO:0007669"/>
    <property type="project" value="TreeGrafter"/>
</dbReference>
<dbReference type="CDD" id="cd01851">
    <property type="entry name" value="GBP"/>
    <property type="match status" value="1"/>
</dbReference>
<dbReference type="FunFam" id="3.40.50.300:FF:000727">
    <property type="entry name" value="Protein SEY1 homolog"/>
    <property type="match status" value="1"/>
</dbReference>
<dbReference type="Gene3D" id="3.40.50.300">
    <property type="entry name" value="P-loop containing nucleotide triphosphate hydrolases"/>
    <property type="match status" value="1"/>
</dbReference>
<dbReference type="HAMAP" id="MF_03109">
    <property type="entry name" value="Sey1"/>
    <property type="match status" value="1"/>
</dbReference>
<dbReference type="InterPro" id="IPR030386">
    <property type="entry name" value="G_GB1_RHD3_dom"/>
</dbReference>
<dbReference type="InterPro" id="IPR027417">
    <property type="entry name" value="P-loop_NTPase"/>
</dbReference>
<dbReference type="InterPro" id="IPR008803">
    <property type="entry name" value="RHD3/Sey1"/>
</dbReference>
<dbReference type="InterPro" id="IPR046758">
    <property type="entry name" value="Sey1/RHD3-like_3HB"/>
</dbReference>
<dbReference type="PANTHER" id="PTHR45923">
    <property type="entry name" value="PROTEIN SEY1"/>
    <property type="match status" value="1"/>
</dbReference>
<dbReference type="PANTHER" id="PTHR45923:SF2">
    <property type="entry name" value="PROTEIN SEY1"/>
    <property type="match status" value="1"/>
</dbReference>
<dbReference type="Pfam" id="PF05879">
    <property type="entry name" value="RHD3_GTPase"/>
    <property type="match status" value="1"/>
</dbReference>
<dbReference type="Pfam" id="PF20428">
    <property type="entry name" value="Sey1_3HB"/>
    <property type="match status" value="1"/>
</dbReference>
<dbReference type="SUPFAM" id="SSF52540">
    <property type="entry name" value="P-loop containing nucleoside triphosphate hydrolases"/>
    <property type="match status" value="1"/>
</dbReference>
<dbReference type="PROSITE" id="PS51715">
    <property type="entry name" value="G_GB1_RHD3"/>
    <property type="match status" value="1"/>
</dbReference>
<feature type="chain" id="PRO_0000384966" description="Protein SEY1">
    <location>
        <begin position="1"/>
        <end position="873"/>
    </location>
</feature>
<feature type="topological domain" description="Cytoplasmic" evidence="1">
    <location>
        <begin position="1"/>
        <end position="749"/>
    </location>
</feature>
<feature type="transmembrane region" description="Helical" evidence="1">
    <location>
        <begin position="750"/>
        <end position="770"/>
    </location>
</feature>
<feature type="topological domain" description="Lumenal" evidence="1">
    <location>
        <begin position="771"/>
        <end position="773"/>
    </location>
</feature>
<feature type="transmembrane region" description="Helical" evidence="1">
    <location>
        <begin position="774"/>
        <end position="794"/>
    </location>
</feature>
<feature type="topological domain" description="Cytoplasmic" evidence="1">
    <location>
        <begin position="795"/>
        <end position="873"/>
    </location>
</feature>
<feature type="domain" description="GB1/RHD3-type G" evidence="2">
    <location>
        <begin position="49"/>
        <end position="307"/>
    </location>
</feature>
<feature type="region of interest" description="Disordered" evidence="3">
    <location>
        <begin position="1"/>
        <end position="20"/>
    </location>
</feature>
<feature type="region of interest" description="Disordered" evidence="3">
    <location>
        <begin position="677"/>
        <end position="703"/>
    </location>
</feature>
<feature type="region of interest" description="Disordered" evidence="3">
    <location>
        <begin position="828"/>
        <end position="873"/>
    </location>
</feature>
<feature type="coiled-coil region" evidence="1">
    <location>
        <begin position="482"/>
        <end position="506"/>
    </location>
</feature>
<feature type="compositionally biased region" description="Acidic residues" evidence="3">
    <location>
        <begin position="690"/>
        <end position="703"/>
    </location>
</feature>
<feature type="compositionally biased region" description="Basic and acidic residues" evidence="3">
    <location>
        <begin position="839"/>
        <end position="863"/>
    </location>
</feature>
<feature type="compositionally biased region" description="Acidic residues" evidence="3">
    <location>
        <begin position="864"/>
        <end position="873"/>
    </location>
</feature>
<feature type="binding site" evidence="1">
    <location>
        <begin position="59"/>
        <end position="66"/>
    </location>
    <ligand>
        <name>GTP</name>
        <dbReference type="ChEBI" id="CHEBI:37565"/>
    </ligand>
</feature>
<sequence>MVANGHFAGSADGQHSSSYEHGVQVIDEDKEFNPNVSKYLTYENVTPAGFNYHLISVFGSQSTGKSTLLNNLFGTHFSVMSETERRQTTKGIWLSKNKRLELRKDRDPQAKMADNILVMDVEGTDGRERGEDQDFERKSALFALATSEVLIVNIWEHQVGLYQGANMGLLKTVFEVNLELFLKDNKSTPRSLLFFVIRDFLGTTPLQNLQNTLLQDLNRIWSSLSKPAGLENSTINDYFDFAFAGLPHKNFQPDKFMDEVQKLSTRFREGHRDPNSLDRKGTGSIEGGIFLPEYHRRIPADGFAVYAEGVWDQIVNNKDLDLPTQQELLAQFRCDEISREALVAFDEAISPFELKQAEAVQAGYPEVLGGLGPAMRNARMKAVKNFDTEACRYHKRVYQMKKAELQDKIDTRLKALFLGQLGAAHRSGVQEFSESVSAAVKAGQKKGASYDFAEIVRKQRKLAIEKFEQEARSTLVEDAPWSNYQQELSLYQKDLERTSGQLRRDEMRRLATRVERWVRSRLGESVDLEFNALGSGRGGSGAPEFGDKPSEKTIWDRVWTLFVDTVLDAERRFTERASSFDASLDEVDVGLWRLRRKSWGVLRAKIDEEMMEGNLLLKLRENFEDKFRYDDAGVPRIWRPTDDIESVYSQARESTLTLIPLLARFKLAETNAPPPLDKWIGHTPSSATPADEEDLTPIGGVDDDEGKSLEEEMTLIGEAKKQDITVRFKKTADGVYVEAKRSAIGGITQVPLYFYGLLFALGWNEILAVLRNPVYFLLLFVCAIGAYITYQLNLWGPIIKMTEAASHQAVEEGKRRLREFLEASDTGRQAMAMSGARNATEEHEMSRLSRKPAERGGRKNRADEDVDDDDDDF</sequence>
<protein>
    <recommendedName>
        <fullName evidence="1">Protein SEY1</fullName>
        <ecNumber evidence="1">3.6.5.-</ecNumber>
    </recommendedName>
</protein>